<evidence type="ECO:0000250" key="1"/>
<evidence type="ECO:0000255" key="2"/>
<evidence type="ECO:0000305" key="3"/>
<name>DB123_PONPY</name>
<reference key="1">
    <citation type="submission" date="2006-11" db="EMBL/GenBank/DDBJ databases">
        <title>Evolution and sequence variation of human beta-defensin genes.</title>
        <authorList>
            <person name="Hollox E.J."/>
            <person name="Armour J.A.L."/>
        </authorList>
    </citation>
    <scope>NUCLEOTIDE SEQUENCE [GENOMIC DNA]</scope>
</reference>
<dbReference type="EMBL" id="AM410141">
    <property type="protein sequence ID" value="CAL68956.1"/>
    <property type="molecule type" value="Genomic_DNA"/>
</dbReference>
<dbReference type="RefSeq" id="XP_054322847.1">
    <property type="nucleotide sequence ID" value="XM_054466872.2"/>
</dbReference>
<dbReference type="SMR" id="A4H236"/>
<dbReference type="GeneID" id="129021467"/>
<dbReference type="GO" id="GO:0005576">
    <property type="term" value="C:extracellular region"/>
    <property type="evidence" value="ECO:0007669"/>
    <property type="project" value="UniProtKB-SubCell"/>
</dbReference>
<dbReference type="GO" id="GO:0050829">
    <property type="term" value="P:defense response to Gram-negative bacterium"/>
    <property type="evidence" value="ECO:0007669"/>
    <property type="project" value="UniProtKB-ARBA"/>
</dbReference>
<dbReference type="GO" id="GO:0045087">
    <property type="term" value="P:innate immune response"/>
    <property type="evidence" value="ECO:0007669"/>
    <property type="project" value="InterPro"/>
</dbReference>
<dbReference type="Gene3D" id="3.10.360.10">
    <property type="entry name" value="Antimicrobial Peptide, Beta-defensin 2, Chain A"/>
    <property type="match status" value="1"/>
</dbReference>
<dbReference type="InterPro" id="IPR050544">
    <property type="entry name" value="Beta-defensin"/>
</dbReference>
<dbReference type="InterPro" id="IPR025933">
    <property type="entry name" value="Beta_defensin_dom"/>
</dbReference>
<dbReference type="PANTHER" id="PTHR15001:SF3">
    <property type="entry name" value="BETA-DEFENSIN 123"/>
    <property type="match status" value="1"/>
</dbReference>
<dbReference type="PANTHER" id="PTHR15001">
    <property type="entry name" value="BETA-DEFENSIN 123-RELATED"/>
    <property type="match status" value="1"/>
</dbReference>
<dbReference type="Pfam" id="PF13841">
    <property type="entry name" value="Defensin_beta_2"/>
    <property type="match status" value="1"/>
</dbReference>
<proteinExistence type="inferred from homology"/>
<keyword id="KW-0044">Antibiotic</keyword>
<keyword id="KW-0929">Antimicrobial</keyword>
<keyword id="KW-0211">Defensin</keyword>
<keyword id="KW-1015">Disulfide bond</keyword>
<keyword id="KW-0964">Secreted</keyword>
<keyword id="KW-0732">Signal</keyword>
<comment type="function">
    <text evidence="3">Has antibacterial activity.</text>
</comment>
<comment type="subcellular location">
    <subcellularLocation>
        <location evidence="3">Secreted</location>
    </subcellularLocation>
</comment>
<comment type="similarity">
    <text evidence="3">Belongs to the beta-defensin family.</text>
</comment>
<accession>A4H236</accession>
<organism>
    <name type="scientific">Pongo pygmaeus</name>
    <name type="common">Bornean orangutan</name>
    <dbReference type="NCBI Taxonomy" id="9600"/>
    <lineage>
        <taxon>Eukaryota</taxon>
        <taxon>Metazoa</taxon>
        <taxon>Chordata</taxon>
        <taxon>Craniata</taxon>
        <taxon>Vertebrata</taxon>
        <taxon>Euteleostomi</taxon>
        <taxon>Mammalia</taxon>
        <taxon>Eutheria</taxon>
        <taxon>Euarchontoglires</taxon>
        <taxon>Primates</taxon>
        <taxon>Haplorrhini</taxon>
        <taxon>Catarrhini</taxon>
        <taxon>Hominidae</taxon>
        <taxon>Pongo</taxon>
    </lineage>
</organism>
<sequence>MKLLLLTLTVLLLLSQLTPGGTQRCWNLYGKCRHRCSKKERVYVYCVNNKMCCVKPKYQPKERWWRF</sequence>
<feature type="signal peptide" evidence="2">
    <location>
        <begin position="1"/>
        <end position="20"/>
    </location>
</feature>
<feature type="peptide" id="PRO_0000289839" description="Beta-defensin 123">
    <location>
        <begin position="21"/>
        <end position="67"/>
    </location>
</feature>
<feature type="disulfide bond" evidence="1">
    <location>
        <begin position="25"/>
        <end position="52"/>
    </location>
</feature>
<feature type="disulfide bond" evidence="1">
    <location>
        <begin position="32"/>
        <end position="46"/>
    </location>
</feature>
<feature type="disulfide bond" evidence="1">
    <location>
        <begin position="36"/>
        <end position="53"/>
    </location>
</feature>
<protein>
    <recommendedName>
        <fullName>Beta-defensin 123</fullName>
    </recommendedName>
    <alternativeName>
        <fullName>Defensin, beta 123</fullName>
    </alternativeName>
</protein>
<gene>
    <name type="primary">DEFB123</name>
</gene>